<protein>
    <recommendedName>
        <fullName evidence="2">Elongation factor Tu</fullName>
        <shortName evidence="2">EF-Tu</shortName>
        <ecNumber evidence="2">3.6.5.3</ecNumber>
    </recommendedName>
</protein>
<evidence type="ECO:0000250" key="1"/>
<evidence type="ECO:0000255" key="2">
    <source>
        <dbReference type="HAMAP-Rule" id="MF_00118"/>
    </source>
</evidence>
<evidence type="ECO:0000269" key="3">
    <source>
    </source>
</evidence>
<evidence type="ECO:0000269" key="4">
    <source>
    </source>
</evidence>
<reference key="1">
    <citation type="journal article" date="2001" name="Science">
        <title>Comparative genomics of Listeria species.</title>
        <authorList>
            <person name="Glaser P."/>
            <person name="Frangeul L."/>
            <person name="Buchrieser C."/>
            <person name="Rusniok C."/>
            <person name="Amend A."/>
            <person name="Baquero F."/>
            <person name="Berche P."/>
            <person name="Bloecker H."/>
            <person name="Brandt P."/>
            <person name="Chakraborty T."/>
            <person name="Charbit A."/>
            <person name="Chetouani F."/>
            <person name="Couve E."/>
            <person name="de Daruvar A."/>
            <person name="Dehoux P."/>
            <person name="Domann E."/>
            <person name="Dominguez-Bernal G."/>
            <person name="Duchaud E."/>
            <person name="Durant L."/>
            <person name="Dussurget O."/>
            <person name="Entian K.-D."/>
            <person name="Fsihi H."/>
            <person name="Garcia-del Portillo F."/>
            <person name="Garrido P."/>
            <person name="Gautier L."/>
            <person name="Goebel W."/>
            <person name="Gomez-Lopez N."/>
            <person name="Hain T."/>
            <person name="Hauf J."/>
            <person name="Jackson D."/>
            <person name="Jones L.-M."/>
            <person name="Kaerst U."/>
            <person name="Kreft J."/>
            <person name="Kuhn M."/>
            <person name="Kunst F."/>
            <person name="Kurapkat G."/>
            <person name="Madueno E."/>
            <person name="Maitournam A."/>
            <person name="Mata Vicente J."/>
            <person name="Ng E."/>
            <person name="Nedjari H."/>
            <person name="Nordsiek G."/>
            <person name="Novella S."/>
            <person name="de Pablos B."/>
            <person name="Perez-Diaz J.-C."/>
            <person name="Purcell R."/>
            <person name="Remmel B."/>
            <person name="Rose M."/>
            <person name="Schlueter T."/>
            <person name="Simoes N."/>
            <person name="Tierrez A."/>
            <person name="Vazquez-Boland J.-A."/>
            <person name="Voss H."/>
            <person name="Wehland J."/>
            <person name="Cossart P."/>
        </authorList>
    </citation>
    <scope>NUCLEOTIDE SEQUENCE [LARGE SCALE GENOMIC DNA]</scope>
    <source>
        <strain>ATCC BAA-679 / EGD-e</strain>
    </source>
</reference>
<reference key="2">
    <citation type="journal article" date="2005" name="Mol. Microbiol.">
        <title>Translation elongation factor EF-Tu is a target for Stp, a serine-threonine phosphatase involved in virulence of Listeria monocytogenes.</title>
        <authorList>
            <person name="Archambaud C."/>
            <person name="Gouin E."/>
            <person name="Pizarro-Cerda J."/>
            <person name="Cossart P."/>
            <person name="Dussurget O."/>
        </authorList>
    </citation>
    <scope>DEPHOSPHORYLATION BY STP</scope>
    <source>
        <strain>ATCC BAA-679 / EGD-e</strain>
    </source>
</reference>
<reference key="3">
    <citation type="journal article" date="2011" name="J. Bacteriol.">
        <title>Regulated shift from helical to polar localization of Listeria monocytogenes cell wall-anchored proteins.</title>
        <authorList>
            <person name="Bruck S."/>
            <person name="Personnic N."/>
            <person name="Prevost M.C."/>
            <person name="Cossart P."/>
            <person name="Bierne H."/>
        </authorList>
    </citation>
    <scope>SUBCELLULAR LOCATION</scope>
    <scope>INDUCTION</scope>
    <source>
        <strain>ATCC BAA-679 / EGD-e</strain>
    </source>
</reference>
<dbReference type="EC" id="3.6.5.3" evidence="2"/>
<dbReference type="EMBL" id="AL591984">
    <property type="protein sequence ID" value="CAD00866.1"/>
    <property type="molecule type" value="Genomic_DNA"/>
</dbReference>
<dbReference type="PIR" id="AD1406">
    <property type="entry name" value="AD1406"/>
</dbReference>
<dbReference type="RefSeq" id="NP_466175.1">
    <property type="nucleotide sequence ID" value="NC_003210.1"/>
</dbReference>
<dbReference type="RefSeq" id="WP_003723640.1">
    <property type="nucleotide sequence ID" value="NZ_CP149495.1"/>
</dbReference>
<dbReference type="SMR" id="Q8Y422"/>
<dbReference type="STRING" id="169963.gene:17595370"/>
<dbReference type="PaxDb" id="169963-lmo2653"/>
<dbReference type="EnsemblBacteria" id="CAD00866">
    <property type="protein sequence ID" value="CAD00866"/>
    <property type="gene ID" value="CAD00866"/>
</dbReference>
<dbReference type="GeneID" id="61190526"/>
<dbReference type="GeneID" id="987166"/>
<dbReference type="KEGG" id="lmo:lmo2653"/>
<dbReference type="PATRIC" id="fig|169963.11.peg.2719"/>
<dbReference type="eggNOG" id="COG0050">
    <property type="taxonomic scope" value="Bacteria"/>
</dbReference>
<dbReference type="HOGENOM" id="CLU_007265_0_0_9"/>
<dbReference type="OrthoDB" id="9804504at2"/>
<dbReference type="PhylomeDB" id="Q8Y422"/>
<dbReference type="BioCyc" id="LMON169963:LMO2653-MONOMER"/>
<dbReference type="Proteomes" id="UP000000817">
    <property type="component" value="Chromosome"/>
</dbReference>
<dbReference type="GO" id="GO:0005737">
    <property type="term" value="C:cytoplasm"/>
    <property type="evidence" value="ECO:0007669"/>
    <property type="project" value="UniProtKB-SubCell"/>
</dbReference>
<dbReference type="GO" id="GO:0005576">
    <property type="term" value="C:extracellular region"/>
    <property type="evidence" value="ECO:0007669"/>
    <property type="project" value="UniProtKB-KW"/>
</dbReference>
<dbReference type="GO" id="GO:0005525">
    <property type="term" value="F:GTP binding"/>
    <property type="evidence" value="ECO:0007669"/>
    <property type="project" value="UniProtKB-UniRule"/>
</dbReference>
<dbReference type="GO" id="GO:0003924">
    <property type="term" value="F:GTPase activity"/>
    <property type="evidence" value="ECO:0007669"/>
    <property type="project" value="InterPro"/>
</dbReference>
<dbReference type="GO" id="GO:0003746">
    <property type="term" value="F:translation elongation factor activity"/>
    <property type="evidence" value="ECO:0000318"/>
    <property type="project" value="GO_Central"/>
</dbReference>
<dbReference type="GO" id="GO:0006414">
    <property type="term" value="P:translational elongation"/>
    <property type="evidence" value="ECO:0000318"/>
    <property type="project" value="GO_Central"/>
</dbReference>
<dbReference type="CDD" id="cd01884">
    <property type="entry name" value="EF_Tu"/>
    <property type="match status" value="1"/>
</dbReference>
<dbReference type="CDD" id="cd03697">
    <property type="entry name" value="EFTU_II"/>
    <property type="match status" value="1"/>
</dbReference>
<dbReference type="CDD" id="cd03707">
    <property type="entry name" value="EFTU_III"/>
    <property type="match status" value="1"/>
</dbReference>
<dbReference type="FunFam" id="2.40.30.10:FF:000001">
    <property type="entry name" value="Elongation factor Tu"/>
    <property type="match status" value="1"/>
</dbReference>
<dbReference type="FunFam" id="3.40.50.300:FF:000003">
    <property type="entry name" value="Elongation factor Tu"/>
    <property type="match status" value="1"/>
</dbReference>
<dbReference type="Gene3D" id="3.40.50.300">
    <property type="entry name" value="P-loop containing nucleotide triphosphate hydrolases"/>
    <property type="match status" value="1"/>
</dbReference>
<dbReference type="Gene3D" id="2.40.30.10">
    <property type="entry name" value="Translation factors"/>
    <property type="match status" value="2"/>
</dbReference>
<dbReference type="HAMAP" id="MF_00118_B">
    <property type="entry name" value="EF_Tu_B"/>
    <property type="match status" value="1"/>
</dbReference>
<dbReference type="InterPro" id="IPR041709">
    <property type="entry name" value="EF-Tu_GTP-bd"/>
</dbReference>
<dbReference type="InterPro" id="IPR050055">
    <property type="entry name" value="EF-Tu_GTPase"/>
</dbReference>
<dbReference type="InterPro" id="IPR004161">
    <property type="entry name" value="EFTu-like_2"/>
</dbReference>
<dbReference type="InterPro" id="IPR033720">
    <property type="entry name" value="EFTU_2"/>
</dbReference>
<dbReference type="InterPro" id="IPR031157">
    <property type="entry name" value="G_TR_CS"/>
</dbReference>
<dbReference type="InterPro" id="IPR027417">
    <property type="entry name" value="P-loop_NTPase"/>
</dbReference>
<dbReference type="InterPro" id="IPR005225">
    <property type="entry name" value="Small_GTP-bd"/>
</dbReference>
<dbReference type="InterPro" id="IPR000795">
    <property type="entry name" value="T_Tr_GTP-bd_dom"/>
</dbReference>
<dbReference type="InterPro" id="IPR009000">
    <property type="entry name" value="Transl_B-barrel_sf"/>
</dbReference>
<dbReference type="InterPro" id="IPR009001">
    <property type="entry name" value="Transl_elong_EF1A/Init_IF2_C"/>
</dbReference>
<dbReference type="InterPro" id="IPR004541">
    <property type="entry name" value="Transl_elong_EFTu/EF1A_bac/org"/>
</dbReference>
<dbReference type="InterPro" id="IPR004160">
    <property type="entry name" value="Transl_elong_EFTu/EF1A_C"/>
</dbReference>
<dbReference type="NCBIfam" id="TIGR00485">
    <property type="entry name" value="EF-Tu"/>
    <property type="match status" value="1"/>
</dbReference>
<dbReference type="NCBIfam" id="NF000766">
    <property type="entry name" value="PRK00049.1"/>
    <property type="match status" value="1"/>
</dbReference>
<dbReference type="NCBIfam" id="NF009372">
    <property type="entry name" value="PRK12735.1"/>
    <property type="match status" value="1"/>
</dbReference>
<dbReference type="NCBIfam" id="NF009373">
    <property type="entry name" value="PRK12736.1"/>
    <property type="match status" value="1"/>
</dbReference>
<dbReference type="NCBIfam" id="TIGR00231">
    <property type="entry name" value="small_GTP"/>
    <property type="match status" value="1"/>
</dbReference>
<dbReference type="PANTHER" id="PTHR43721:SF22">
    <property type="entry name" value="ELONGATION FACTOR TU, MITOCHONDRIAL"/>
    <property type="match status" value="1"/>
</dbReference>
<dbReference type="PANTHER" id="PTHR43721">
    <property type="entry name" value="ELONGATION FACTOR TU-RELATED"/>
    <property type="match status" value="1"/>
</dbReference>
<dbReference type="Pfam" id="PF00009">
    <property type="entry name" value="GTP_EFTU"/>
    <property type="match status" value="1"/>
</dbReference>
<dbReference type="Pfam" id="PF03144">
    <property type="entry name" value="GTP_EFTU_D2"/>
    <property type="match status" value="1"/>
</dbReference>
<dbReference type="Pfam" id="PF03143">
    <property type="entry name" value="GTP_EFTU_D3"/>
    <property type="match status" value="1"/>
</dbReference>
<dbReference type="PRINTS" id="PR00315">
    <property type="entry name" value="ELONGATNFCT"/>
</dbReference>
<dbReference type="SUPFAM" id="SSF50465">
    <property type="entry name" value="EF-Tu/eEF-1alpha/eIF2-gamma C-terminal domain"/>
    <property type="match status" value="1"/>
</dbReference>
<dbReference type="SUPFAM" id="SSF52540">
    <property type="entry name" value="P-loop containing nucleoside triphosphate hydrolases"/>
    <property type="match status" value="1"/>
</dbReference>
<dbReference type="SUPFAM" id="SSF50447">
    <property type="entry name" value="Translation proteins"/>
    <property type="match status" value="1"/>
</dbReference>
<dbReference type="PROSITE" id="PS00301">
    <property type="entry name" value="G_TR_1"/>
    <property type="match status" value="1"/>
</dbReference>
<dbReference type="PROSITE" id="PS51722">
    <property type="entry name" value="G_TR_2"/>
    <property type="match status" value="1"/>
</dbReference>
<comment type="function">
    <text evidence="2">GTP hydrolase that promotes the GTP-dependent binding of aminoacyl-tRNA to the A-site of ribosomes during protein biosynthesis.</text>
</comment>
<comment type="catalytic activity">
    <reaction evidence="2">
        <text>GTP + H2O = GDP + phosphate + H(+)</text>
        <dbReference type="Rhea" id="RHEA:19669"/>
        <dbReference type="ChEBI" id="CHEBI:15377"/>
        <dbReference type="ChEBI" id="CHEBI:15378"/>
        <dbReference type="ChEBI" id="CHEBI:37565"/>
        <dbReference type="ChEBI" id="CHEBI:43474"/>
        <dbReference type="ChEBI" id="CHEBI:58189"/>
        <dbReference type="EC" id="3.6.5.3"/>
    </reaction>
    <physiologicalReaction direction="left-to-right" evidence="2">
        <dbReference type="Rhea" id="RHEA:19670"/>
    </physiologicalReaction>
</comment>
<comment type="subunit">
    <text evidence="2">Monomer.</text>
</comment>
<comment type="subcellular location">
    <subcellularLocation>
        <location evidence="2">Cytoplasm</location>
    </subcellularLocation>
    <subcellularLocation>
        <location evidence="4">Secreted</location>
        <location evidence="4">Cell wall</location>
    </subcellularLocation>
</comment>
<comment type="induction">
    <text evidence="4">Equally expressed in stationary and exponential phase (at protein level).</text>
</comment>
<comment type="PTM">
    <text evidence="3">Phosphorylated on serine and/or threonine residue(s), dephosphorylated by Stp.</text>
</comment>
<comment type="similarity">
    <text evidence="2">Belongs to the TRAFAC class translation factor GTPase superfamily. Classic translation factor GTPase family. EF-Tu/EF-1A subfamily.</text>
</comment>
<feature type="chain" id="PRO_0000091343" description="Elongation factor Tu">
    <location>
        <begin position="1"/>
        <end position="395"/>
    </location>
</feature>
<feature type="domain" description="tr-type G">
    <location>
        <begin position="10"/>
        <end position="204"/>
    </location>
</feature>
<feature type="region of interest" description="G1" evidence="1">
    <location>
        <begin position="19"/>
        <end position="26"/>
    </location>
</feature>
<feature type="region of interest" description="G2" evidence="1">
    <location>
        <begin position="60"/>
        <end position="64"/>
    </location>
</feature>
<feature type="region of interest" description="G3" evidence="1">
    <location>
        <begin position="81"/>
        <end position="84"/>
    </location>
</feature>
<feature type="region of interest" description="G4" evidence="1">
    <location>
        <begin position="136"/>
        <end position="139"/>
    </location>
</feature>
<feature type="region of interest" description="G5" evidence="1">
    <location>
        <begin position="174"/>
        <end position="176"/>
    </location>
</feature>
<feature type="binding site" evidence="2">
    <location>
        <begin position="19"/>
        <end position="26"/>
    </location>
    <ligand>
        <name>GTP</name>
        <dbReference type="ChEBI" id="CHEBI:37565"/>
    </ligand>
</feature>
<feature type="binding site" evidence="2">
    <location>
        <position position="26"/>
    </location>
    <ligand>
        <name>Mg(2+)</name>
        <dbReference type="ChEBI" id="CHEBI:18420"/>
    </ligand>
</feature>
<feature type="binding site" evidence="2">
    <location>
        <begin position="81"/>
        <end position="85"/>
    </location>
    <ligand>
        <name>GTP</name>
        <dbReference type="ChEBI" id="CHEBI:37565"/>
    </ligand>
</feature>
<feature type="binding site" evidence="2">
    <location>
        <begin position="136"/>
        <end position="139"/>
    </location>
    <ligand>
        <name>GTP</name>
        <dbReference type="ChEBI" id="CHEBI:37565"/>
    </ligand>
</feature>
<gene>
    <name evidence="2" type="primary">tuf</name>
    <name type="synonym">tufA</name>
    <name type="ordered locus">lmo2653</name>
</gene>
<organism>
    <name type="scientific">Listeria monocytogenes serovar 1/2a (strain ATCC BAA-679 / EGD-e)</name>
    <dbReference type="NCBI Taxonomy" id="169963"/>
    <lineage>
        <taxon>Bacteria</taxon>
        <taxon>Bacillati</taxon>
        <taxon>Bacillota</taxon>
        <taxon>Bacilli</taxon>
        <taxon>Bacillales</taxon>
        <taxon>Listeriaceae</taxon>
        <taxon>Listeria</taxon>
    </lineage>
</organism>
<keyword id="KW-0134">Cell wall</keyword>
<keyword id="KW-0963">Cytoplasm</keyword>
<keyword id="KW-0251">Elongation factor</keyword>
<keyword id="KW-0342">GTP-binding</keyword>
<keyword id="KW-0378">Hydrolase</keyword>
<keyword id="KW-0460">Magnesium</keyword>
<keyword id="KW-0479">Metal-binding</keyword>
<keyword id="KW-0547">Nucleotide-binding</keyword>
<keyword id="KW-0597">Phosphoprotein</keyword>
<keyword id="KW-0648">Protein biosynthesis</keyword>
<keyword id="KW-1185">Reference proteome</keyword>
<keyword id="KW-0964">Secreted</keyword>
<sequence length="395" mass="43342">MAKEKFDRSKPHVNIGTIGHVDHGKTTLTAAITTVLAKKGYADAQAYDQIDGAPEERERGITISTAHVEYQTDSRHYAHVDCPGHADYVKNMITGAAQMDGAILVVSAADGPMPQTREHILLSRQVGVPYIVVFMNKCDMVDDEELLELVEMEIRDLLTEYEFPGDDIPVIKGSALKALQGEADWEAKIDELMEAVDSYIPTPERDTDKPFMMPVEDVFSITGRGTVATGRVERGQVKVGDEVEVIGIEEESKKVVVTGVEMFRKLLDYAEAGDNIGALLRGVAREDIQRGQVLAKPGSITPHTNFKAETYVLTKEEGGRHTPFFNNYRPQFYFRTTDVTGIVTLPEGTEMVMPGDNIELAVELIAPIAIEDGTKFSIREGGRTVGAGVVSNISK</sequence>
<name>EFTU_LISMO</name>
<accession>Q8Y422</accession>
<proteinExistence type="evidence at protein level"/>